<comment type="function">
    <text evidence="2">Catalyzes the synthesis of levan, a fructose polymer, by transferring the fructosyl moiety from sucrose to a growing acceptor molecule (PubMed:33675829). Also displays sucrose hydrolase activity (PubMed:33675829). Can depolymerize the levan produced once substrate is completely exhausted (PubMed:33675829).</text>
</comment>
<comment type="catalytic activity">
    <reaction evidence="2">
        <text>[6)-beta-D-fructofuranosyl-(2-&gt;](n) alpha-D-glucopyranoside + sucrose = [6)-beta-D-fructofuranosyl-(2-&gt;](n+1) alpha-D-glucopyranoside + D-glucose</text>
        <dbReference type="Rhea" id="RHEA:13653"/>
        <dbReference type="Rhea" id="RHEA-COMP:13093"/>
        <dbReference type="Rhea" id="RHEA-COMP:13094"/>
        <dbReference type="ChEBI" id="CHEBI:4167"/>
        <dbReference type="ChEBI" id="CHEBI:17992"/>
        <dbReference type="ChEBI" id="CHEBI:134464"/>
        <dbReference type="EC" id="2.4.1.10"/>
    </reaction>
</comment>
<comment type="activity regulation">
    <text evidence="2">Sucrose hydrolase activity is negatively affected by salt concentration (PubMed:33675829). The levan polymerization rate increases sharply in relation to sucrose concentration reaching the maximum at 100 mM sucrose, and then steadily decreases, suggesting a strong inhibition of the activity by the substrate (PubMed:33675829).</text>
</comment>
<comment type="biophysicochemical properties">
    <kinetics>
        <KM evidence="2">60.4 mM for sucrose (at pH 5.0)</KM>
        <KM evidence="2">57.3 mM for sucrose (at pH 7.0)</KM>
        <text evidence="2">kcat is 7300 min(-1) with sucrose as substrate (at pH 5.0). kcat is 7500 min(-1) with sucrose as substrate (at pH 7.0).</text>
    </kinetics>
    <phDependence>
        <text evidence="2">For sucrose hydrolase activity, shows the maximal activity in the 5-7 pH range, while the activity decreases at pH values lower that 5 and higher than 8 (PubMed:33675829). Levan polymerization occurs mainly at pH 5.0 (PubMed:33675829).</text>
    </phDependence>
    <temperatureDependence>
        <text evidence="2">Highly thermostable (PubMed:33675829). At pH 5.0 and pH 7.0, sucrose hydrolase activity progressively increases with temperature until 55 degrees Celsius and then falls quickly (PubMed:33675829).</text>
    </temperatureDependence>
</comment>
<comment type="subunit">
    <text evidence="2">Homodimer.</text>
</comment>
<comment type="induction">
    <text evidence="2">Expressed both in presence and absence of sucrose in the medium (PubMed:33675829). The expression level does not change in a significant manner during growth (PubMed:33675829).</text>
</comment>
<comment type="miscellaneous">
    <text evidence="2">Strain KL103 contains two functional levansucrases, Lscbeta and Lscgamma (PubMed:33675829). A third copy, lscalpha, is non-coding because of a premature stop codon (PubMed:33675829). Lscbeta and Lscgamma show different sucrose splitting and polymerization properties, and differential expression, suggesting two distinct roles in the physiology of the bacterium (PubMed:33675829).</text>
</comment>
<comment type="similarity">
    <text evidence="4">Belongs to the glycosyl hydrolase 68 family.</text>
</comment>
<organism>
    <name type="scientific">Pseudomonas syringae pv. actinidiae</name>
    <dbReference type="NCBI Taxonomy" id="103796"/>
    <lineage>
        <taxon>Bacteria</taxon>
        <taxon>Pseudomonadati</taxon>
        <taxon>Pseudomonadota</taxon>
        <taxon>Gammaproteobacteria</taxon>
        <taxon>Pseudomonadales</taxon>
        <taxon>Pseudomonadaceae</taxon>
        <taxon>Pseudomonas</taxon>
        <taxon>Pseudomonas syringae</taxon>
    </lineage>
</organism>
<dbReference type="EC" id="2.4.1.10" evidence="2"/>
<dbReference type="EMBL" id="BGKA01000324">
    <property type="protein sequence ID" value="GBH21631.1"/>
    <property type="molecule type" value="Genomic_DNA"/>
</dbReference>
<dbReference type="RefSeq" id="WP_017685048.1">
    <property type="nucleotide sequence ID" value="NZ_PGSZ01000062.1"/>
</dbReference>
<dbReference type="SMR" id="A0A2V0R8Y2"/>
<dbReference type="Proteomes" id="UP000248291">
    <property type="component" value="Unassembled WGS sequence"/>
</dbReference>
<dbReference type="GO" id="GO:0050053">
    <property type="term" value="F:levansucrase activity"/>
    <property type="evidence" value="ECO:0007669"/>
    <property type="project" value="InterPro"/>
</dbReference>
<dbReference type="GO" id="GO:0009758">
    <property type="term" value="P:carbohydrate utilization"/>
    <property type="evidence" value="ECO:0007669"/>
    <property type="project" value="InterPro"/>
</dbReference>
<dbReference type="CDD" id="cd08997">
    <property type="entry name" value="GH68"/>
    <property type="match status" value="1"/>
</dbReference>
<dbReference type="FunFam" id="2.115.10.20:FF:000007">
    <property type="entry name" value="Levansucrase LscB"/>
    <property type="match status" value="1"/>
</dbReference>
<dbReference type="Gene3D" id="2.115.10.20">
    <property type="entry name" value="Glycosyl hydrolase domain, family 43"/>
    <property type="match status" value="1"/>
</dbReference>
<dbReference type="InterPro" id="IPR003469">
    <property type="entry name" value="Glyco_hydro_68"/>
</dbReference>
<dbReference type="InterPro" id="IPR023296">
    <property type="entry name" value="Glyco_hydro_beta-prop_sf"/>
</dbReference>
<dbReference type="Pfam" id="PF02435">
    <property type="entry name" value="Glyco_hydro_68"/>
    <property type="match status" value="1"/>
</dbReference>
<dbReference type="SUPFAM" id="SSF75005">
    <property type="entry name" value="Arabinanase/levansucrase/invertase"/>
    <property type="match status" value="1"/>
</dbReference>
<name>LSCC_PSESF</name>
<reference key="1">
    <citation type="submission" date="2018-04" db="EMBL/GenBank/DDBJ databases">
        <title>Draft genome sequence of Pseudomonas syringae pv. actinidiae biovar 3 strains isolated from kiwifruit in Kagawa prefecture.</title>
        <authorList>
            <person name="Tabuchi M."/>
            <person name="Saito M."/>
            <person name="Fujiwara S."/>
            <person name="Sasa N."/>
            <person name="Akimitsu K."/>
            <person name="Gomi K."/>
            <person name="Konishi-Sugita S."/>
            <person name="Hamano K."/>
            <person name="Kataoka I."/>
        </authorList>
    </citation>
    <scope>NUCLEOTIDE SEQUENCE [LARGE SCALE GENOMIC DNA]</scope>
    <source>
        <strain>MAFF212211</strain>
    </source>
</reference>
<reference key="2">
    <citation type="journal article" date="2021" name="Int. J. Biol. Macromol.">
        <title>Lscbeta and lscgamma, two novel levansucrases of Pseudomonas syringae pv. actinidiae biovar 3, the causal agent of bacterial canker of kiwifruit, show different enzymatic properties.</title>
        <authorList>
            <person name="Luti S."/>
            <person name="Campigli S."/>
            <person name="Ranaldi F."/>
            <person name="Paoli P."/>
            <person name="Pazzagli L."/>
            <person name="Marchi G."/>
        </authorList>
    </citation>
    <scope>FUNCTION</scope>
    <scope>CATALYTIC ACTIVITY</scope>
    <scope>ACTIVITY REGULATION</scope>
    <scope>BIOPHYSICOCHEMICAL PROPERTIES</scope>
    <scope>SUBUNIT</scope>
    <scope>INDUCTION</scope>
    <scope>IDENTIFICATION BY MASS SPECTROMETRY</scope>
    <source>
        <strain>KL103 / Biovar 3</strain>
    </source>
</reference>
<sequence>MIAGRRHFDCRPLHLAGNINYEPTVWSRADALKVNENDPTTTQPLVSADFPVMSDTVFIWDTMPLRELDGTVVSVNGWSVILTLTADRHPNDPQYLDANGRYDIKRDWEDRHGRARMCYWYSRTGKDWIFGGRVMAEGVSPTTREWAGTPILLNDKGDIDLYYTCVTPGAAIAKVRGRIVTSDQGVELEDFTLVKKLFEANGTYYQTEAQNSSWNFRDPSPFIDPNDGKLYMVFEGNVAGERGSHTVGAAELGPVPPGHEDVGGARFQVGCIGLAVAKDLSGEEWEILPPLVTAVGVNDQTERPHYVFQDGKYYLFTISHKFTYAEGLTGPDGVYGFVGEHLFGPYRPMNASGLVLGNPPEQPFQTYSHCVMPNGLVTSFIDSVPTEGEDYRIGGTEAPTVRILLKGDRSFVQEEYDYGYIPAMKDVTLS</sequence>
<feature type="chain" id="PRO_0000459750" description="Levansucrase Lscgamma">
    <location>
        <begin position="1"/>
        <end position="430"/>
    </location>
</feature>
<feature type="active site" description="Nucleophile" evidence="1">
    <location>
        <position position="61"/>
    </location>
</feature>
<feature type="active site" description="Proton donor/acceptor" evidence="1">
    <location>
        <position position="302"/>
    </location>
</feature>
<feature type="binding site" evidence="1">
    <location>
        <position position="60"/>
    </location>
    <ligand>
        <name>sucrose</name>
        <dbReference type="ChEBI" id="CHEBI:17992"/>
    </ligand>
</feature>
<feature type="binding site" evidence="1">
    <location>
        <position position="61"/>
    </location>
    <ligand>
        <name>sucrose</name>
        <dbReference type="ChEBI" id="CHEBI:17992"/>
    </ligand>
</feature>
<feature type="binding site" evidence="1">
    <location>
        <position position="147"/>
    </location>
    <ligand>
        <name>sucrose</name>
        <dbReference type="ChEBI" id="CHEBI:17992"/>
    </ligand>
</feature>
<feature type="binding site" evidence="1">
    <location>
        <position position="217"/>
    </location>
    <ligand>
        <name>sucrose</name>
        <dbReference type="ChEBI" id="CHEBI:17992"/>
    </ligand>
</feature>
<feature type="binding site" evidence="1">
    <location>
        <position position="218"/>
    </location>
    <ligand>
        <name>sucrose</name>
        <dbReference type="ChEBI" id="CHEBI:17992"/>
    </ligand>
</feature>
<feature type="site" description="Transition state stabilizer" evidence="1">
    <location>
        <position position="218"/>
    </location>
</feature>
<protein>
    <recommendedName>
        <fullName evidence="3">Levansucrase Lscgamma</fullName>
        <ecNumber evidence="2">2.4.1.10</ecNumber>
    </recommendedName>
    <alternativeName>
        <fullName evidence="4">Sucrose 6-fructosyltransferase</fullName>
    </alternativeName>
</protein>
<evidence type="ECO:0000250" key="1">
    <source>
        <dbReference type="UniProtKB" id="P05655"/>
    </source>
</evidence>
<evidence type="ECO:0000269" key="2">
    <source>
    </source>
</evidence>
<evidence type="ECO:0000303" key="3">
    <source>
    </source>
</evidence>
<evidence type="ECO:0000305" key="4"/>
<evidence type="ECO:0000312" key="5">
    <source>
        <dbReference type="EMBL" id="GBH21631.1"/>
    </source>
</evidence>
<keyword id="KW-0119">Carbohydrate metabolism</keyword>
<keyword id="KW-0328">Glycosyltransferase</keyword>
<keyword id="KW-0808">Transferase</keyword>
<accession>A0A2V0R8Y2</accession>
<proteinExistence type="evidence at protein level"/>
<gene>
    <name evidence="3" type="primary">lscgamma</name>
    <name evidence="5" type="ORF">KPSA3_07681</name>
</gene>